<feature type="chain" id="PRO_0000108390" description="Cytochrome c-551">
    <location>
        <begin position="1"/>
        <end position="82"/>
    </location>
</feature>
<feature type="binding site" description="covalent">
    <location>
        <position position="12"/>
    </location>
    <ligand>
        <name>heme c</name>
        <dbReference type="ChEBI" id="CHEBI:61717"/>
    </ligand>
</feature>
<feature type="binding site" description="covalent">
    <location>
        <position position="15"/>
    </location>
    <ligand>
        <name>heme c</name>
        <dbReference type="ChEBI" id="CHEBI:61717"/>
    </ligand>
</feature>
<feature type="binding site" description="axial binding residue">
    <location>
        <position position="16"/>
    </location>
    <ligand>
        <name>heme c</name>
        <dbReference type="ChEBI" id="CHEBI:61717"/>
    </ligand>
    <ligandPart>
        <name>Fe</name>
        <dbReference type="ChEBI" id="CHEBI:18248"/>
    </ligandPart>
</feature>
<feature type="binding site" description="axial binding residue">
    <location>
        <position position="61"/>
    </location>
    <ligand>
        <name>heme c</name>
        <dbReference type="ChEBI" id="CHEBI:61717"/>
    </ligand>
    <ligandPart>
        <name>Fe</name>
        <dbReference type="ChEBI" id="CHEBI:18248"/>
    </ligandPart>
</feature>
<reference key="1">
    <citation type="journal article" date="1973" name="Syst. Zool.">
        <title>Bacterial cytochromes C and molecular evolution.</title>
        <authorList>
            <person name="Ambler R.P."/>
        </authorList>
    </citation>
    <scope>PROTEIN SEQUENCE</scope>
    <source>
        <strain>ATCC 12837 / NCIMB 8789 / DSM 87</strain>
    </source>
</reference>
<name>CY551_AZOVI</name>
<dbReference type="PIR" id="A00096">
    <property type="entry name" value="CCAV5"/>
</dbReference>
<dbReference type="SMR" id="P00104"/>
<dbReference type="GO" id="GO:0009055">
    <property type="term" value="F:electron transfer activity"/>
    <property type="evidence" value="ECO:0007669"/>
    <property type="project" value="InterPro"/>
</dbReference>
<dbReference type="GO" id="GO:0020037">
    <property type="term" value="F:heme binding"/>
    <property type="evidence" value="ECO:0007669"/>
    <property type="project" value="InterPro"/>
</dbReference>
<dbReference type="GO" id="GO:0005506">
    <property type="term" value="F:iron ion binding"/>
    <property type="evidence" value="ECO:0007669"/>
    <property type="project" value="InterPro"/>
</dbReference>
<dbReference type="Gene3D" id="1.10.760.10">
    <property type="entry name" value="Cytochrome c-like domain"/>
    <property type="match status" value="1"/>
</dbReference>
<dbReference type="InterPro" id="IPR009056">
    <property type="entry name" value="Cyt_c-like_dom"/>
</dbReference>
<dbReference type="InterPro" id="IPR036909">
    <property type="entry name" value="Cyt_c-like_dom_sf"/>
</dbReference>
<dbReference type="InterPro" id="IPR002324">
    <property type="entry name" value="Cyt_c_ID"/>
</dbReference>
<dbReference type="Pfam" id="PF00034">
    <property type="entry name" value="Cytochrom_C"/>
    <property type="match status" value="1"/>
</dbReference>
<dbReference type="PRINTS" id="PR00606">
    <property type="entry name" value="CYTCHROMECID"/>
</dbReference>
<dbReference type="SUPFAM" id="SSF46626">
    <property type="entry name" value="Cytochrome c"/>
    <property type="match status" value="1"/>
</dbReference>
<dbReference type="PROSITE" id="PS51007">
    <property type="entry name" value="CYTC"/>
    <property type="match status" value="1"/>
</dbReference>
<proteinExistence type="evidence at protein level"/>
<protein>
    <recommendedName>
        <fullName>Cytochrome c-551</fullName>
    </recommendedName>
    <alternativeName>
        <fullName>Cytochrome c551</fullName>
    </alternativeName>
</protein>
<accession>P00104</accession>
<keyword id="KW-0903">Direct protein sequencing</keyword>
<keyword id="KW-0249">Electron transport</keyword>
<keyword id="KW-0349">Heme</keyword>
<keyword id="KW-0408">Iron</keyword>
<keyword id="KW-0479">Metal-binding</keyword>
<keyword id="KW-0813">Transport</keyword>
<sequence>ETGEELYKTKGCTVCHAIDSKLVGPSFKEVTAKYAGQAGIADTLAAKIKAGGSGNWGQIPMPPNPVSEAEAKTLAEWVLTHK</sequence>
<organism>
    <name type="scientific">Azotobacter vinelandii</name>
    <dbReference type="NCBI Taxonomy" id="354"/>
    <lineage>
        <taxon>Bacteria</taxon>
        <taxon>Pseudomonadati</taxon>
        <taxon>Pseudomonadota</taxon>
        <taxon>Gammaproteobacteria</taxon>
        <taxon>Pseudomonadales</taxon>
        <taxon>Pseudomonadaceae</taxon>
        <taxon>Azotobacter</taxon>
    </lineage>
</organism>
<comment type="PTM">
    <text>Binds 1 heme c group covalently per subunit.</text>
</comment>